<evidence type="ECO:0000250" key="1"/>
<evidence type="ECO:0000255" key="2">
    <source>
        <dbReference type="PROSITE-ProRule" id="PRU00175"/>
    </source>
</evidence>
<evidence type="ECO:0000255" key="3">
    <source>
        <dbReference type="PROSITE-ProRule" id="PRU00723"/>
    </source>
</evidence>
<evidence type="ECO:0000256" key="4">
    <source>
        <dbReference type="SAM" id="MobiDB-lite"/>
    </source>
</evidence>
<evidence type="ECO:0000305" key="5"/>
<sequence length="329" mass="36222">MSEAPAPVVTFKKGPSRRPAQSRQRRRSPSPLDPVAEASASASGSNVVRPERKSLANPLVQGTKRRRTNANNEEEEDGVGGGLDEFDYAAEGGLTRKGDELATRANDWDLEDVDGQGQRDKKVRLDEDGEIVTDDGLYRGASAYLPTINKTRETLDKKMKSGPIKATSHVRTITLMDYQPDVCKDYKETGFCGYGDSCKFLHDRGDYLAGWQLDKLPEEGVREVEEEDEEEEVPFACLICRQPFTQPVVTKCGHYFCMGCAAKRFQKSPKCYACGAPTQGIFNIADKVIAKIEARNKARREAREERAEQTGGGGIEIGGGSDEEGSDEE</sequence>
<proteinExistence type="inferred from homology"/>
<reference key="1">
    <citation type="journal article" date="2005" name="Science">
        <title>The genome of the basidiomycetous yeast and human pathogen Cryptococcus neoformans.</title>
        <authorList>
            <person name="Loftus B.J."/>
            <person name="Fung E."/>
            <person name="Roncaglia P."/>
            <person name="Rowley D."/>
            <person name="Amedeo P."/>
            <person name="Bruno D."/>
            <person name="Vamathevan J."/>
            <person name="Miranda M."/>
            <person name="Anderson I.J."/>
            <person name="Fraser J.A."/>
            <person name="Allen J.E."/>
            <person name="Bosdet I.E."/>
            <person name="Brent M.R."/>
            <person name="Chiu R."/>
            <person name="Doering T.L."/>
            <person name="Donlin M.J."/>
            <person name="D'Souza C.A."/>
            <person name="Fox D.S."/>
            <person name="Grinberg V."/>
            <person name="Fu J."/>
            <person name="Fukushima M."/>
            <person name="Haas B.J."/>
            <person name="Huang J.C."/>
            <person name="Janbon G."/>
            <person name="Jones S.J.M."/>
            <person name="Koo H.L."/>
            <person name="Krzywinski M.I."/>
            <person name="Kwon-Chung K.J."/>
            <person name="Lengeler K.B."/>
            <person name="Maiti R."/>
            <person name="Marra M.A."/>
            <person name="Marra R.E."/>
            <person name="Mathewson C.A."/>
            <person name="Mitchell T.G."/>
            <person name="Pertea M."/>
            <person name="Riggs F.R."/>
            <person name="Salzberg S.L."/>
            <person name="Schein J.E."/>
            <person name="Shvartsbeyn A."/>
            <person name="Shin H."/>
            <person name="Shumway M."/>
            <person name="Specht C.A."/>
            <person name="Suh B.B."/>
            <person name="Tenney A."/>
            <person name="Utterback T.R."/>
            <person name="Wickes B.L."/>
            <person name="Wortman J.R."/>
            <person name="Wye N.H."/>
            <person name="Kronstad J.W."/>
            <person name="Lodge J.K."/>
            <person name="Heitman J."/>
            <person name="Davis R.W."/>
            <person name="Fraser C.M."/>
            <person name="Hyman R.W."/>
        </authorList>
    </citation>
    <scope>NUCLEOTIDE SEQUENCE [LARGE SCALE GENOMIC DNA]</scope>
    <source>
        <strain>JEC21 / ATCC MYA-565</strain>
    </source>
</reference>
<organism>
    <name type="scientific">Cryptococcus neoformans var. neoformans serotype D (strain JEC21 / ATCC MYA-565)</name>
    <name type="common">Filobasidiella neoformans</name>
    <dbReference type="NCBI Taxonomy" id="214684"/>
    <lineage>
        <taxon>Eukaryota</taxon>
        <taxon>Fungi</taxon>
        <taxon>Dikarya</taxon>
        <taxon>Basidiomycota</taxon>
        <taxon>Agaricomycotina</taxon>
        <taxon>Tremellomycetes</taxon>
        <taxon>Tremellales</taxon>
        <taxon>Cryptococcaceae</taxon>
        <taxon>Cryptococcus</taxon>
        <taxon>Cryptococcus neoformans species complex</taxon>
    </lineage>
</organism>
<name>CWC24_CRYNJ</name>
<accession>P0CQ64</accession>
<accession>Q55MN0</accession>
<accession>Q5KB05</accession>
<keyword id="KW-0238">DNA-binding</keyword>
<keyword id="KW-0479">Metal-binding</keyword>
<keyword id="KW-0507">mRNA processing</keyword>
<keyword id="KW-0508">mRNA splicing</keyword>
<keyword id="KW-0539">Nucleus</keyword>
<keyword id="KW-1185">Reference proteome</keyword>
<keyword id="KW-0747">Spliceosome</keyword>
<keyword id="KW-0862">Zinc</keyword>
<keyword id="KW-0863">Zinc-finger</keyword>
<dbReference type="EMBL" id="AE017349">
    <property type="protein sequence ID" value="AAW45613.1"/>
    <property type="molecule type" value="Genomic_DNA"/>
</dbReference>
<dbReference type="RefSeq" id="XP_572920.1">
    <property type="nucleotide sequence ID" value="XM_572920.1"/>
</dbReference>
<dbReference type="FunCoup" id="P0CQ64">
    <property type="interactions" value="101"/>
</dbReference>
<dbReference type="STRING" id="214684.P0CQ64"/>
<dbReference type="PaxDb" id="214684-P0CQ64"/>
<dbReference type="EnsemblFungi" id="AAW45613">
    <property type="protein sequence ID" value="AAW45613"/>
    <property type="gene ID" value="CNI04230"/>
</dbReference>
<dbReference type="GeneID" id="3259777"/>
<dbReference type="KEGG" id="cne:CNI04230"/>
<dbReference type="VEuPathDB" id="FungiDB:CNI04230"/>
<dbReference type="eggNOG" id="KOG1813">
    <property type="taxonomic scope" value="Eukaryota"/>
</dbReference>
<dbReference type="HOGENOM" id="CLU_050460_1_1_1"/>
<dbReference type="InParanoid" id="P0CQ64"/>
<dbReference type="OMA" id="KKQATHN"/>
<dbReference type="OrthoDB" id="25761at2759"/>
<dbReference type="Proteomes" id="UP000002149">
    <property type="component" value="Chromosome 9"/>
</dbReference>
<dbReference type="GO" id="GO:0005684">
    <property type="term" value="C:U2-type spliceosomal complex"/>
    <property type="evidence" value="ECO:0000318"/>
    <property type="project" value="GO_Central"/>
</dbReference>
<dbReference type="GO" id="GO:0003677">
    <property type="term" value="F:DNA binding"/>
    <property type="evidence" value="ECO:0007669"/>
    <property type="project" value="UniProtKB-KW"/>
</dbReference>
<dbReference type="GO" id="GO:0008270">
    <property type="term" value="F:zinc ion binding"/>
    <property type="evidence" value="ECO:0007669"/>
    <property type="project" value="UniProtKB-KW"/>
</dbReference>
<dbReference type="GO" id="GO:0006397">
    <property type="term" value="P:mRNA processing"/>
    <property type="evidence" value="ECO:0007669"/>
    <property type="project" value="UniProtKB-KW"/>
</dbReference>
<dbReference type="GO" id="GO:0034247">
    <property type="term" value="P:snoRNA splicing"/>
    <property type="evidence" value="ECO:0000318"/>
    <property type="project" value="GO_Central"/>
</dbReference>
<dbReference type="CDD" id="cd16539">
    <property type="entry name" value="RING-HC_RNF113A_B"/>
    <property type="match status" value="1"/>
</dbReference>
<dbReference type="FunFam" id="3.30.40.10:FF:000045">
    <property type="entry name" value="RING finger protein 113A"/>
    <property type="match status" value="1"/>
</dbReference>
<dbReference type="Gene3D" id="4.10.1000.10">
    <property type="entry name" value="Zinc finger, CCCH-type"/>
    <property type="match status" value="1"/>
</dbReference>
<dbReference type="Gene3D" id="3.30.40.10">
    <property type="entry name" value="Zinc/RING finger domain, C3HC4 (zinc finger)"/>
    <property type="match status" value="1"/>
</dbReference>
<dbReference type="InterPro" id="IPR039971">
    <property type="entry name" value="CWC24-like"/>
</dbReference>
<dbReference type="InterPro" id="IPR000571">
    <property type="entry name" value="Znf_CCCH"/>
</dbReference>
<dbReference type="InterPro" id="IPR036855">
    <property type="entry name" value="Znf_CCCH_sf"/>
</dbReference>
<dbReference type="InterPro" id="IPR001841">
    <property type="entry name" value="Znf_RING"/>
</dbReference>
<dbReference type="InterPro" id="IPR013083">
    <property type="entry name" value="Znf_RING/FYVE/PHD"/>
</dbReference>
<dbReference type="InterPro" id="IPR017907">
    <property type="entry name" value="Znf_RING_CS"/>
</dbReference>
<dbReference type="PANTHER" id="PTHR12930:SF0">
    <property type="entry name" value="RING FINGER PROTEIN 113B"/>
    <property type="match status" value="1"/>
</dbReference>
<dbReference type="PANTHER" id="PTHR12930">
    <property type="entry name" value="ZINC FINGER PROTEIN 183"/>
    <property type="match status" value="1"/>
</dbReference>
<dbReference type="Pfam" id="PF13920">
    <property type="entry name" value="zf-C3HC4_3"/>
    <property type="match status" value="1"/>
</dbReference>
<dbReference type="Pfam" id="PF00642">
    <property type="entry name" value="zf-CCCH"/>
    <property type="match status" value="1"/>
</dbReference>
<dbReference type="SMART" id="SM00184">
    <property type="entry name" value="RING"/>
    <property type="match status" value="1"/>
</dbReference>
<dbReference type="SMART" id="SM00356">
    <property type="entry name" value="ZnF_C3H1"/>
    <property type="match status" value="1"/>
</dbReference>
<dbReference type="SUPFAM" id="SSF90229">
    <property type="entry name" value="CCCH zinc finger"/>
    <property type="match status" value="1"/>
</dbReference>
<dbReference type="SUPFAM" id="SSF57850">
    <property type="entry name" value="RING/U-box"/>
    <property type="match status" value="1"/>
</dbReference>
<dbReference type="PROSITE" id="PS50103">
    <property type="entry name" value="ZF_C3H1"/>
    <property type="match status" value="1"/>
</dbReference>
<dbReference type="PROSITE" id="PS00518">
    <property type="entry name" value="ZF_RING_1"/>
    <property type="match status" value="1"/>
</dbReference>
<dbReference type="PROSITE" id="PS50089">
    <property type="entry name" value="ZF_RING_2"/>
    <property type="match status" value="1"/>
</dbReference>
<protein>
    <recommendedName>
        <fullName>Pre-mRNA-splicing factor CWC24</fullName>
    </recommendedName>
</protein>
<gene>
    <name type="primary">CWC24</name>
    <name type="ordered locus">CNI04230</name>
</gene>
<feature type="chain" id="PRO_0000055887" description="Pre-mRNA-splicing factor CWC24">
    <location>
        <begin position="1"/>
        <end position="329"/>
    </location>
</feature>
<feature type="zinc finger region" description="C3H1-type" evidence="3">
    <location>
        <begin position="177"/>
        <end position="205"/>
    </location>
</feature>
<feature type="zinc finger region" description="RING-type" evidence="2">
    <location>
        <begin position="237"/>
        <end position="275"/>
    </location>
</feature>
<feature type="region of interest" description="Disordered" evidence="4">
    <location>
        <begin position="1"/>
        <end position="86"/>
    </location>
</feature>
<feature type="region of interest" description="Disordered" evidence="4">
    <location>
        <begin position="298"/>
        <end position="329"/>
    </location>
</feature>
<feature type="compositionally biased region" description="Acidic residues" evidence="4">
    <location>
        <begin position="72"/>
        <end position="86"/>
    </location>
</feature>
<feature type="compositionally biased region" description="Basic and acidic residues" evidence="4">
    <location>
        <begin position="298"/>
        <end position="308"/>
    </location>
</feature>
<feature type="compositionally biased region" description="Gly residues" evidence="4">
    <location>
        <begin position="310"/>
        <end position="320"/>
    </location>
</feature>
<comment type="function">
    <text evidence="1">Involved in pre-mRNA splicing.</text>
</comment>
<comment type="subunit">
    <text evidence="1">Associated with the spliceosome.</text>
</comment>
<comment type="subcellular location">
    <subcellularLocation>
        <location evidence="1">Nucleus</location>
    </subcellularLocation>
</comment>
<comment type="similarity">
    <text evidence="5">Belongs to the CWC24 family.</text>
</comment>